<accession>A0QA95</accession>
<dbReference type="EC" id="2.7.1.33" evidence="1"/>
<dbReference type="EMBL" id="CP000479">
    <property type="protein sequence ID" value="ABK68483.1"/>
    <property type="molecule type" value="Genomic_DNA"/>
</dbReference>
<dbReference type="RefSeq" id="WP_003875614.1">
    <property type="nucleotide sequence ID" value="NC_008595.1"/>
</dbReference>
<dbReference type="SMR" id="A0QA95"/>
<dbReference type="KEGG" id="mav:MAV_0553"/>
<dbReference type="HOGENOM" id="CLU_066627_1_0_11"/>
<dbReference type="UniPathway" id="UPA00241">
    <property type="reaction ID" value="UER00352"/>
</dbReference>
<dbReference type="Proteomes" id="UP000001574">
    <property type="component" value="Chromosome"/>
</dbReference>
<dbReference type="GO" id="GO:0005737">
    <property type="term" value="C:cytoplasm"/>
    <property type="evidence" value="ECO:0007669"/>
    <property type="project" value="UniProtKB-SubCell"/>
</dbReference>
<dbReference type="GO" id="GO:0005524">
    <property type="term" value="F:ATP binding"/>
    <property type="evidence" value="ECO:0007669"/>
    <property type="project" value="UniProtKB-UniRule"/>
</dbReference>
<dbReference type="GO" id="GO:0046872">
    <property type="term" value="F:metal ion binding"/>
    <property type="evidence" value="ECO:0007669"/>
    <property type="project" value="UniProtKB-KW"/>
</dbReference>
<dbReference type="GO" id="GO:0004594">
    <property type="term" value="F:pantothenate kinase activity"/>
    <property type="evidence" value="ECO:0007669"/>
    <property type="project" value="UniProtKB-UniRule"/>
</dbReference>
<dbReference type="GO" id="GO:0015937">
    <property type="term" value="P:coenzyme A biosynthetic process"/>
    <property type="evidence" value="ECO:0007669"/>
    <property type="project" value="UniProtKB-UniRule"/>
</dbReference>
<dbReference type="CDD" id="cd24015">
    <property type="entry name" value="ASKHA_NBD_PanK-III"/>
    <property type="match status" value="1"/>
</dbReference>
<dbReference type="FunFam" id="3.30.420.40:FF:000146">
    <property type="entry name" value="Type III pantothenate kinase"/>
    <property type="match status" value="1"/>
</dbReference>
<dbReference type="Gene3D" id="3.30.420.40">
    <property type="match status" value="2"/>
</dbReference>
<dbReference type="HAMAP" id="MF_01274">
    <property type="entry name" value="Pantothen_kinase_3"/>
    <property type="match status" value="1"/>
</dbReference>
<dbReference type="InterPro" id="IPR043129">
    <property type="entry name" value="ATPase_NBD"/>
</dbReference>
<dbReference type="InterPro" id="IPR004619">
    <property type="entry name" value="Type_III_PanK"/>
</dbReference>
<dbReference type="NCBIfam" id="TIGR00671">
    <property type="entry name" value="baf"/>
    <property type="match status" value="1"/>
</dbReference>
<dbReference type="NCBIfam" id="NF009845">
    <property type="entry name" value="PRK13318.1-3"/>
    <property type="match status" value="1"/>
</dbReference>
<dbReference type="PANTHER" id="PTHR34265">
    <property type="entry name" value="TYPE III PANTOTHENATE KINASE"/>
    <property type="match status" value="1"/>
</dbReference>
<dbReference type="PANTHER" id="PTHR34265:SF1">
    <property type="entry name" value="TYPE III PANTOTHENATE KINASE"/>
    <property type="match status" value="1"/>
</dbReference>
<dbReference type="Pfam" id="PF03309">
    <property type="entry name" value="Pan_kinase"/>
    <property type="match status" value="1"/>
</dbReference>
<dbReference type="SUPFAM" id="SSF53067">
    <property type="entry name" value="Actin-like ATPase domain"/>
    <property type="match status" value="2"/>
</dbReference>
<evidence type="ECO:0000255" key="1">
    <source>
        <dbReference type="HAMAP-Rule" id="MF_01274"/>
    </source>
</evidence>
<organism>
    <name type="scientific">Mycobacterium avium (strain 104)</name>
    <dbReference type="NCBI Taxonomy" id="243243"/>
    <lineage>
        <taxon>Bacteria</taxon>
        <taxon>Bacillati</taxon>
        <taxon>Actinomycetota</taxon>
        <taxon>Actinomycetes</taxon>
        <taxon>Mycobacteriales</taxon>
        <taxon>Mycobacteriaceae</taxon>
        <taxon>Mycobacterium</taxon>
        <taxon>Mycobacterium avium complex (MAC)</taxon>
    </lineage>
</organism>
<gene>
    <name evidence="1" type="primary">coaX</name>
    <name type="ordered locus">MAV_0553</name>
</gene>
<keyword id="KW-0067">ATP-binding</keyword>
<keyword id="KW-0173">Coenzyme A biosynthesis</keyword>
<keyword id="KW-0963">Cytoplasm</keyword>
<keyword id="KW-0418">Kinase</keyword>
<keyword id="KW-0479">Metal-binding</keyword>
<keyword id="KW-0547">Nucleotide-binding</keyword>
<keyword id="KW-0630">Potassium</keyword>
<keyword id="KW-0808">Transferase</keyword>
<feature type="chain" id="PRO_1000054389" description="Type III pantothenate kinase">
    <location>
        <begin position="1"/>
        <end position="271"/>
    </location>
</feature>
<feature type="active site" description="Proton acceptor" evidence="1">
    <location>
        <position position="111"/>
    </location>
</feature>
<feature type="binding site" evidence="1">
    <location>
        <begin position="6"/>
        <end position="13"/>
    </location>
    <ligand>
        <name>ATP</name>
        <dbReference type="ChEBI" id="CHEBI:30616"/>
    </ligand>
</feature>
<feature type="binding site" evidence="1">
    <location>
        <begin position="109"/>
        <end position="112"/>
    </location>
    <ligand>
        <name>substrate</name>
    </ligand>
</feature>
<feature type="binding site" evidence="1">
    <location>
        <position position="131"/>
    </location>
    <ligand>
        <name>K(+)</name>
        <dbReference type="ChEBI" id="CHEBI:29103"/>
    </ligand>
</feature>
<feature type="binding site" evidence="1">
    <location>
        <position position="134"/>
    </location>
    <ligand>
        <name>ATP</name>
        <dbReference type="ChEBI" id="CHEBI:30616"/>
    </ligand>
</feature>
<feature type="binding site" evidence="1">
    <location>
        <position position="186"/>
    </location>
    <ligand>
        <name>substrate</name>
    </ligand>
</feature>
<comment type="function">
    <text evidence="1">Catalyzes the phosphorylation of pantothenate (Pan), the first step in CoA biosynthesis.</text>
</comment>
<comment type="catalytic activity">
    <reaction evidence="1">
        <text>(R)-pantothenate + ATP = (R)-4'-phosphopantothenate + ADP + H(+)</text>
        <dbReference type="Rhea" id="RHEA:16373"/>
        <dbReference type="ChEBI" id="CHEBI:10986"/>
        <dbReference type="ChEBI" id="CHEBI:15378"/>
        <dbReference type="ChEBI" id="CHEBI:29032"/>
        <dbReference type="ChEBI" id="CHEBI:30616"/>
        <dbReference type="ChEBI" id="CHEBI:456216"/>
        <dbReference type="EC" id="2.7.1.33"/>
    </reaction>
</comment>
<comment type="cofactor">
    <cofactor evidence="1">
        <name>NH4(+)</name>
        <dbReference type="ChEBI" id="CHEBI:28938"/>
    </cofactor>
    <cofactor evidence="1">
        <name>K(+)</name>
        <dbReference type="ChEBI" id="CHEBI:29103"/>
    </cofactor>
    <text evidence="1">A monovalent cation. Ammonium or potassium.</text>
</comment>
<comment type="pathway">
    <text evidence="1">Cofactor biosynthesis; coenzyme A biosynthesis; CoA from (R)-pantothenate: step 1/5.</text>
</comment>
<comment type="subunit">
    <text evidence="1">Homodimer.</text>
</comment>
<comment type="subcellular location">
    <subcellularLocation>
        <location evidence="1">Cytoplasm</location>
    </subcellularLocation>
</comment>
<comment type="similarity">
    <text evidence="1">Belongs to the type III pantothenate kinase family.</text>
</comment>
<sequence length="271" mass="28996">MLLAIDVRNTHTVVGLISGSKEHAKVVQQWRIRTESEITADELALTIDGLIGDDSERLTGAAALSTVPSVLHEVRLMLDQYWPSVPHVLIEPGVRTGIPLLVDNPKEVGADRIVNCLAAFHRFQSPAIVIDFGSSICVDVVSAKGEFLGGAIAPGLQVSSDAAAARSAALRRVELARPRSVIGKNTVECMQAGAVFGFAGLVDGLVGRIREDVPGFGGDDVAIVATGHTAPLLLPELDTVSHYDQHLTLHGLRLVFERNRDAQRGRLKTAR</sequence>
<protein>
    <recommendedName>
        <fullName evidence="1">Type III pantothenate kinase</fullName>
        <ecNumber evidence="1">2.7.1.33</ecNumber>
    </recommendedName>
    <alternativeName>
        <fullName evidence="1">PanK-III</fullName>
    </alternativeName>
    <alternativeName>
        <fullName evidence="1">Pantothenic acid kinase</fullName>
    </alternativeName>
</protein>
<name>COAX_MYCA1</name>
<proteinExistence type="inferred from homology"/>
<reference key="1">
    <citation type="submission" date="2006-10" db="EMBL/GenBank/DDBJ databases">
        <authorList>
            <person name="Fleischmann R.D."/>
            <person name="Dodson R.J."/>
            <person name="Haft D.H."/>
            <person name="Merkel J.S."/>
            <person name="Nelson W.C."/>
            <person name="Fraser C.M."/>
        </authorList>
    </citation>
    <scope>NUCLEOTIDE SEQUENCE [LARGE SCALE GENOMIC DNA]</scope>
    <source>
        <strain>104</strain>
    </source>
</reference>